<sequence length="233" mass="25437">MSTESMIRDVELAEEALPKKAGGPQGSRRCLCLSLFSFLLVAGATTLFCLLHFGVIGPQKEELLTGLQIMNPLAQTLRSSSQASRDKPVAHVVADPAAQGQLQWEKRFANTLLANGVKLEDNQLVVPTDGLYLIYSQVLFSGQRCPSTPVFLTHTISRLAVSYPNKANLLSAIKSPCQGGTSEEAEAKPWYEPIYLGGVFQLEKDDRLSAEINMPNYLDFAESGQVYFGIIAL</sequence>
<accession>P59694</accession>
<proteinExistence type="evidence at transcript level"/>
<reference key="1">
    <citation type="submission" date="2003-04" db="EMBL/GenBank/DDBJ databases">
        <title>Cloning and sequence analysis of cytokine cDNAs of llama and camel.</title>
        <authorList>
            <person name="Odbileg R."/>
            <person name="Lee S.-I."/>
            <person name="Yoshida R."/>
            <person name="Chang K.-S."/>
            <person name="Ohashi K."/>
            <person name="Sugimoto C."/>
            <person name="Onuma M."/>
        </authorList>
    </citation>
    <scope>NUCLEOTIDE SEQUENCE [MRNA]</scope>
</reference>
<feature type="chain" id="PRO_0000034425" description="Tumor necrosis factor, membrane form">
    <location>
        <begin position="1"/>
        <end position="233"/>
    </location>
</feature>
<feature type="chain" id="PRO_0000417235" description="Intracellular domain 1" evidence="1">
    <location>
        <begin position="1"/>
        <end position="39"/>
    </location>
</feature>
<feature type="chain" id="PRO_0000417236" description="Intracellular domain 2" evidence="1">
    <location>
        <begin position="1"/>
        <end position="35"/>
    </location>
</feature>
<feature type="chain" id="PRO_0000417237" description="C-domain 1" evidence="1">
    <location>
        <begin position="50"/>
        <end status="unknown"/>
    </location>
</feature>
<feature type="chain" id="PRO_0000417238" description="C-domain 2" evidence="1">
    <location>
        <begin position="52"/>
        <end status="unknown"/>
    </location>
</feature>
<feature type="chain" id="PRO_0000034426" description="Tumor necrosis factor, soluble form" evidence="1">
    <location>
        <begin position="77"/>
        <end position="233"/>
    </location>
</feature>
<feature type="topological domain" description="Cytoplasmic" evidence="4">
    <location>
        <begin position="1"/>
        <end position="34"/>
    </location>
</feature>
<feature type="transmembrane region" description="Helical; Signal-anchor for type II membrane protein" evidence="1">
    <location>
        <begin position="35"/>
        <end position="57"/>
    </location>
</feature>
<feature type="topological domain" description="Extracellular" evidence="4">
    <location>
        <begin position="58"/>
        <end position="233"/>
    </location>
</feature>
<feature type="domain" description="THD" evidence="5">
    <location>
        <begin position="88"/>
        <end position="233"/>
    </location>
</feature>
<feature type="site" description="Cleavage; by SPPL2A or SPPL2B" evidence="1">
    <location>
        <begin position="34"/>
        <end position="35"/>
    </location>
</feature>
<feature type="site" description="Cleavage; by SPPL2A or SPPL2B" evidence="1">
    <location>
        <begin position="39"/>
        <end position="40"/>
    </location>
</feature>
<feature type="site" description="Cleavage; by SPPL2A or SPPL2B" evidence="1">
    <location>
        <begin position="49"/>
        <end position="50"/>
    </location>
</feature>
<feature type="site" description="Cleavage; by SPPL2A or SPPL2B" evidence="1">
    <location>
        <begin position="51"/>
        <end position="52"/>
    </location>
</feature>
<feature type="site" description="Cleavage; by ADAM17" evidence="1">
    <location>
        <begin position="76"/>
        <end position="77"/>
    </location>
</feature>
<feature type="modified residue" description="Phosphoserine; by CK1" evidence="1">
    <location>
        <position position="2"/>
    </location>
</feature>
<feature type="lipid moiety-binding region" description="N6-myristoyl lysine" evidence="2">
    <location>
        <position position="19"/>
    </location>
</feature>
<feature type="lipid moiety-binding region" description="N6-myristoyl lysine" evidence="2">
    <location>
        <position position="20"/>
    </location>
</feature>
<feature type="glycosylation site" description="O-linked (GalNAc...) serine; in soluble form" evidence="1">
    <location>
        <position position="80"/>
    </location>
</feature>
<feature type="disulfide bond" evidence="5">
    <location>
        <begin position="145"/>
        <end position="177"/>
    </location>
</feature>
<name>TNFA_LAMGL</name>
<gene>
    <name type="primary">TNF</name>
    <name type="synonym">TNFA</name>
    <name type="synonym">TNFSF2</name>
</gene>
<comment type="function">
    <text evidence="2 3">Cytokine that binds to TNFRSF1A/TNFR1 and TNFRSF1B/TNFBR. It is mainly secreted by macrophages and can induce cell death of certain tumor cell lines. It is potent pyrogen causing fever by direct action or by stimulation of interleukin-1 secretion and is implicated in the induction of cachexia, Under certain conditions it can stimulate cell proliferation and induce cell differentiation (By similarity). Induces insulin resistance in adipocytes via inhibition of insulin-induced IRS1 tyrosine phosphorylation and insulin-induced glucose uptake. Induces GKAP42 protein degradation in adipocytes which is partially responsible for TNF-induced insulin resistance (By similarity). Plays a role in angiogenesis by inducing VEGF production synergistically with IL1B and IL6 (By similarity). Promotes osteoclastogenesis and therefore mediates bone resorption (By similarity).</text>
</comment>
<comment type="function">
    <text evidence="2">The TNF intracellular domain (ICD) form induces IL12 production in dendritic cells.</text>
</comment>
<comment type="subunit">
    <text evidence="1">Homotrimer. Interacts with SPPL2B (By similarity).</text>
</comment>
<comment type="subcellular location">
    <subcellularLocation>
        <location evidence="1">Cell membrane</location>
        <topology evidence="1">Single-pass type II membrane protein</topology>
    </subcellularLocation>
</comment>
<comment type="subcellular location">
    <molecule>Tumor necrosis factor, membrane form</molecule>
    <subcellularLocation>
        <location evidence="1">Membrane</location>
        <topology evidence="1">Single-pass type II membrane protein</topology>
    </subcellularLocation>
</comment>
<comment type="subcellular location">
    <molecule>Tumor necrosis factor, soluble form</molecule>
    <subcellularLocation>
        <location evidence="1">Secreted</location>
    </subcellularLocation>
</comment>
<comment type="subcellular location">
    <molecule>C-domain 1</molecule>
    <subcellularLocation>
        <location evidence="1">Secreted</location>
    </subcellularLocation>
</comment>
<comment type="subcellular location">
    <molecule>C-domain 2</molecule>
    <subcellularLocation>
        <location evidence="1">Secreted</location>
    </subcellularLocation>
</comment>
<comment type="PTM">
    <text evidence="1">The soluble form derives from the membrane form by proteolytic processing. The membrane-bound form is further proteolytically processed by SPPL2A or SPPL2B through regulated intramembrane proteolysis producing TNF intracellular domains (ICD1 and ICD2) released in the cytosol and TNF C-domain 1 and C-domain 2 secreted into the extracellular space (By similarity).</text>
</comment>
<comment type="PTM">
    <text evidence="1">The membrane form, but not the soluble form, is phosphorylated on serine residues. Dephosphorylation of the membrane form occurs by binding to soluble TNFRSF1A/TNFR1 (By similarity).</text>
</comment>
<comment type="PTM">
    <text evidence="1">O-glycosylated; glycans contain galactose, N-acetylgalactosamine and N-acetylneuraminic acid.</text>
</comment>
<comment type="PTM">
    <molecule>Tumor necrosis factor, soluble form</molecule>
    <text evidence="2">The soluble form is demyristoylated by SIRT6, promoting its secretion.</text>
</comment>
<comment type="similarity">
    <text evidence="6">Belongs to the tumor necrosis factor family.</text>
</comment>
<organism>
    <name type="scientific">Lama glama</name>
    <name type="common">Llama</name>
    <dbReference type="NCBI Taxonomy" id="9844"/>
    <lineage>
        <taxon>Eukaryota</taxon>
        <taxon>Metazoa</taxon>
        <taxon>Chordata</taxon>
        <taxon>Craniata</taxon>
        <taxon>Vertebrata</taxon>
        <taxon>Euteleostomi</taxon>
        <taxon>Mammalia</taxon>
        <taxon>Eutheria</taxon>
        <taxon>Laurasiatheria</taxon>
        <taxon>Artiodactyla</taxon>
        <taxon>Tylopoda</taxon>
        <taxon>Camelidae</taxon>
        <taxon>Lama</taxon>
    </lineage>
</organism>
<keyword id="KW-1003">Cell membrane</keyword>
<keyword id="KW-0202">Cytokine</keyword>
<keyword id="KW-1015">Disulfide bond</keyword>
<keyword id="KW-0325">Glycoprotein</keyword>
<keyword id="KW-0449">Lipoprotein</keyword>
<keyword id="KW-0472">Membrane</keyword>
<keyword id="KW-0519">Myristate</keyword>
<keyword id="KW-0597">Phosphoprotein</keyword>
<keyword id="KW-0964">Secreted</keyword>
<keyword id="KW-0735">Signal-anchor</keyword>
<keyword id="KW-0812">Transmembrane</keyword>
<keyword id="KW-1133">Transmembrane helix</keyword>
<dbReference type="EMBL" id="AB107646">
    <property type="protein sequence ID" value="BAC75383.1"/>
    <property type="molecule type" value="mRNA"/>
</dbReference>
<dbReference type="SMR" id="P59694"/>
<dbReference type="GlyCosmos" id="P59694">
    <property type="glycosylation" value="1 site, No reported glycans"/>
</dbReference>
<dbReference type="GO" id="GO:0009986">
    <property type="term" value="C:cell surface"/>
    <property type="evidence" value="ECO:0007669"/>
    <property type="project" value="TreeGrafter"/>
</dbReference>
<dbReference type="GO" id="GO:0005615">
    <property type="term" value="C:extracellular space"/>
    <property type="evidence" value="ECO:0007669"/>
    <property type="project" value="UniProtKB-KW"/>
</dbReference>
<dbReference type="GO" id="GO:0005886">
    <property type="term" value="C:plasma membrane"/>
    <property type="evidence" value="ECO:0007669"/>
    <property type="project" value="UniProtKB-SubCell"/>
</dbReference>
<dbReference type="GO" id="GO:0005125">
    <property type="term" value="F:cytokine activity"/>
    <property type="evidence" value="ECO:0007669"/>
    <property type="project" value="UniProtKB-KW"/>
</dbReference>
<dbReference type="GO" id="GO:0005164">
    <property type="term" value="F:tumor necrosis factor receptor binding"/>
    <property type="evidence" value="ECO:0007669"/>
    <property type="project" value="InterPro"/>
</dbReference>
<dbReference type="GO" id="GO:0008625">
    <property type="term" value="P:extrinsic apoptotic signaling pathway via death domain receptors"/>
    <property type="evidence" value="ECO:0007669"/>
    <property type="project" value="TreeGrafter"/>
</dbReference>
<dbReference type="GO" id="GO:0006955">
    <property type="term" value="P:immune response"/>
    <property type="evidence" value="ECO:0007669"/>
    <property type="project" value="InterPro"/>
</dbReference>
<dbReference type="GO" id="GO:0097527">
    <property type="term" value="P:necroptotic signaling pathway"/>
    <property type="evidence" value="ECO:0000250"/>
    <property type="project" value="CAFA"/>
</dbReference>
<dbReference type="GO" id="GO:0043242">
    <property type="term" value="P:negative regulation of protein-containing complex disassembly"/>
    <property type="evidence" value="ECO:0000250"/>
    <property type="project" value="UniProtKB"/>
</dbReference>
<dbReference type="GO" id="GO:0043065">
    <property type="term" value="P:positive regulation of apoptotic process"/>
    <property type="evidence" value="ECO:0000250"/>
    <property type="project" value="UniProtKB"/>
</dbReference>
<dbReference type="GO" id="GO:0043123">
    <property type="term" value="P:positive regulation of canonical NF-kappaB signal transduction"/>
    <property type="evidence" value="ECO:0007669"/>
    <property type="project" value="TreeGrafter"/>
</dbReference>
<dbReference type="GO" id="GO:2001238">
    <property type="term" value="P:positive regulation of extrinsic apoptotic signaling pathway"/>
    <property type="evidence" value="ECO:0007669"/>
    <property type="project" value="TreeGrafter"/>
</dbReference>
<dbReference type="GO" id="GO:0043507">
    <property type="term" value="P:positive regulation of JUN kinase activity"/>
    <property type="evidence" value="ECO:0000250"/>
    <property type="project" value="UniProtKB"/>
</dbReference>
<dbReference type="GO" id="GO:0043406">
    <property type="term" value="P:positive regulation of MAP kinase activity"/>
    <property type="evidence" value="ECO:0000250"/>
    <property type="project" value="UniProtKB"/>
</dbReference>
<dbReference type="GO" id="GO:0051092">
    <property type="term" value="P:positive regulation of NF-kappaB transcription factor activity"/>
    <property type="evidence" value="ECO:0000250"/>
    <property type="project" value="UniProtKB"/>
</dbReference>
<dbReference type="GO" id="GO:0001934">
    <property type="term" value="P:positive regulation of protein phosphorylation"/>
    <property type="evidence" value="ECO:0000250"/>
    <property type="project" value="UniProtKB"/>
</dbReference>
<dbReference type="GO" id="GO:0043243">
    <property type="term" value="P:positive regulation of protein-containing complex disassembly"/>
    <property type="evidence" value="ECO:0000250"/>
    <property type="project" value="UniProtKB"/>
</dbReference>
<dbReference type="GO" id="GO:0045944">
    <property type="term" value="P:positive regulation of transcription by RNA polymerase II"/>
    <property type="evidence" value="ECO:0007669"/>
    <property type="project" value="TreeGrafter"/>
</dbReference>
<dbReference type="GO" id="GO:0065008">
    <property type="term" value="P:regulation of biological quality"/>
    <property type="evidence" value="ECO:0007669"/>
    <property type="project" value="UniProtKB-ARBA"/>
</dbReference>
<dbReference type="GO" id="GO:0050793">
    <property type="term" value="P:regulation of developmental process"/>
    <property type="evidence" value="ECO:0007669"/>
    <property type="project" value="UniProtKB-ARBA"/>
</dbReference>
<dbReference type="GO" id="GO:0051239">
    <property type="term" value="P:regulation of multicellular organismal process"/>
    <property type="evidence" value="ECO:0007669"/>
    <property type="project" value="UniProtKB-ARBA"/>
</dbReference>
<dbReference type="GO" id="GO:0051046">
    <property type="term" value="P:regulation of secretion"/>
    <property type="evidence" value="ECO:0007669"/>
    <property type="project" value="UniProtKB-ARBA"/>
</dbReference>
<dbReference type="GO" id="GO:0033209">
    <property type="term" value="P:tumor necrosis factor-mediated signaling pathway"/>
    <property type="evidence" value="ECO:0007669"/>
    <property type="project" value="TreeGrafter"/>
</dbReference>
<dbReference type="GO" id="GO:0010573">
    <property type="term" value="P:vascular endothelial growth factor production"/>
    <property type="evidence" value="ECO:0000250"/>
    <property type="project" value="UniProtKB"/>
</dbReference>
<dbReference type="CDD" id="cd00184">
    <property type="entry name" value="TNF"/>
    <property type="match status" value="1"/>
</dbReference>
<dbReference type="FunFam" id="2.60.120.40:FF:000007">
    <property type="entry name" value="Tumor necrosis factor"/>
    <property type="match status" value="1"/>
</dbReference>
<dbReference type="Gene3D" id="2.60.120.40">
    <property type="match status" value="1"/>
</dbReference>
<dbReference type="InterPro" id="IPR006053">
    <property type="entry name" value="TNF"/>
</dbReference>
<dbReference type="InterPro" id="IPR002959">
    <property type="entry name" value="TNF_alpha"/>
</dbReference>
<dbReference type="InterPro" id="IPR021184">
    <property type="entry name" value="TNF_CS"/>
</dbReference>
<dbReference type="InterPro" id="IPR006052">
    <property type="entry name" value="TNF_dom"/>
</dbReference>
<dbReference type="InterPro" id="IPR008983">
    <property type="entry name" value="Tumour_necrosis_fac-like_dom"/>
</dbReference>
<dbReference type="PANTHER" id="PTHR11471:SF23">
    <property type="entry name" value="TUMOR NECROSIS FACTOR"/>
    <property type="match status" value="1"/>
</dbReference>
<dbReference type="PANTHER" id="PTHR11471">
    <property type="entry name" value="TUMOR NECROSIS FACTOR FAMILY MEMBER"/>
    <property type="match status" value="1"/>
</dbReference>
<dbReference type="Pfam" id="PF00229">
    <property type="entry name" value="TNF"/>
    <property type="match status" value="1"/>
</dbReference>
<dbReference type="PRINTS" id="PR01234">
    <property type="entry name" value="TNECROSISFCT"/>
</dbReference>
<dbReference type="PRINTS" id="PR01235">
    <property type="entry name" value="TNFALPHA"/>
</dbReference>
<dbReference type="SMART" id="SM00207">
    <property type="entry name" value="TNF"/>
    <property type="match status" value="1"/>
</dbReference>
<dbReference type="SUPFAM" id="SSF49842">
    <property type="entry name" value="TNF-like"/>
    <property type="match status" value="1"/>
</dbReference>
<dbReference type="PROSITE" id="PS00251">
    <property type="entry name" value="THD_1"/>
    <property type="match status" value="1"/>
</dbReference>
<dbReference type="PROSITE" id="PS50049">
    <property type="entry name" value="THD_2"/>
    <property type="match status" value="1"/>
</dbReference>
<evidence type="ECO:0000250" key="1"/>
<evidence type="ECO:0000250" key="2">
    <source>
        <dbReference type="UniProtKB" id="P01375"/>
    </source>
</evidence>
<evidence type="ECO:0000250" key="3">
    <source>
        <dbReference type="UniProtKB" id="P06804"/>
    </source>
</evidence>
<evidence type="ECO:0000255" key="4"/>
<evidence type="ECO:0000255" key="5">
    <source>
        <dbReference type="PROSITE-ProRule" id="PRU01387"/>
    </source>
</evidence>
<evidence type="ECO:0000305" key="6"/>
<protein>
    <recommendedName>
        <fullName>Tumor necrosis factor</fullName>
    </recommendedName>
    <alternativeName>
        <fullName>Cachectin</fullName>
    </alternativeName>
    <alternativeName>
        <fullName>TNF-alpha</fullName>
    </alternativeName>
    <alternativeName>
        <fullName>Tumor necrosis factor ligand superfamily member 2</fullName>
        <shortName>TNF-a</shortName>
    </alternativeName>
    <component>
        <recommendedName>
            <fullName>Tumor necrosis factor, membrane form</fullName>
        </recommendedName>
        <alternativeName>
            <fullName>N-terminal fragment</fullName>
            <shortName>NTF</shortName>
        </alternativeName>
    </component>
    <component>
        <recommendedName>
            <fullName>Intracellular domain 1</fullName>
            <shortName>ICD1</shortName>
        </recommendedName>
    </component>
    <component>
        <recommendedName>
            <fullName>Intracellular domain 2</fullName>
            <shortName>ICD2</shortName>
        </recommendedName>
    </component>
    <component>
        <recommendedName>
            <fullName>C-domain 1</fullName>
        </recommendedName>
    </component>
    <component>
        <recommendedName>
            <fullName>C-domain 2</fullName>
        </recommendedName>
    </component>
    <component>
        <recommendedName>
            <fullName>Tumor necrosis factor, soluble form</fullName>
        </recommendedName>
    </component>
</protein>